<name>Y901_BACAN</name>
<keyword id="KW-1185">Reference proteome</keyword>
<gene>
    <name type="ordered locus">BA_0901</name>
    <name type="ordered locus">GBAA_0901</name>
    <name type="ordered locus">BAS0853</name>
</gene>
<proteinExistence type="evidence at protein level"/>
<reference key="1">
    <citation type="journal article" date="2003" name="Nature">
        <title>The genome sequence of Bacillus anthracis Ames and comparison to closely related bacteria.</title>
        <authorList>
            <person name="Read T.D."/>
            <person name="Peterson S.N."/>
            <person name="Tourasse N.J."/>
            <person name="Baillie L.W."/>
            <person name="Paulsen I.T."/>
            <person name="Nelson K.E."/>
            <person name="Tettelin H."/>
            <person name="Fouts D.E."/>
            <person name="Eisen J.A."/>
            <person name="Gill S.R."/>
            <person name="Holtzapple E.K."/>
            <person name="Okstad O.A."/>
            <person name="Helgason E."/>
            <person name="Rilstone J."/>
            <person name="Wu M."/>
            <person name="Kolonay J.F."/>
            <person name="Beanan M.J."/>
            <person name="Dodson R.J."/>
            <person name="Brinkac L.M."/>
            <person name="Gwinn M.L."/>
            <person name="DeBoy R.T."/>
            <person name="Madpu R."/>
            <person name="Daugherty S.C."/>
            <person name="Durkin A.S."/>
            <person name="Haft D.H."/>
            <person name="Nelson W.C."/>
            <person name="Peterson J.D."/>
            <person name="Pop M."/>
            <person name="Khouri H.M."/>
            <person name="Radune D."/>
            <person name="Benton J.L."/>
            <person name="Mahamoud Y."/>
            <person name="Jiang L."/>
            <person name="Hance I.R."/>
            <person name="Weidman J.F."/>
            <person name="Berry K.J."/>
            <person name="Plaut R.D."/>
            <person name="Wolf A.M."/>
            <person name="Watkins K.L."/>
            <person name="Nierman W.C."/>
            <person name="Hazen A."/>
            <person name="Cline R.T."/>
            <person name="Redmond C."/>
            <person name="Thwaite J.E."/>
            <person name="White O."/>
            <person name="Salzberg S.L."/>
            <person name="Thomason B."/>
            <person name="Friedlander A.M."/>
            <person name="Koehler T.M."/>
            <person name="Hanna P.C."/>
            <person name="Kolstoe A.-B."/>
            <person name="Fraser C.M."/>
        </authorList>
    </citation>
    <scope>NUCLEOTIDE SEQUENCE [LARGE SCALE GENOMIC DNA]</scope>
    <source>
        <strain>Ames / isolate Porton</strain>
    </source>
</reference>
<reference key="2">
    <citation type="journal article" date="2009" name="J. Bacteriol.">
        <title>The complete genome sequence of Bacillus anthracis Ames 'Ancestor'.</title>
        <authorList>
            <person name="Ravel J."/>
            <person name="Jiang L."/>
            <person name="Stanley S.T."/>
            <person name="Wilson M.R."/>
            <person name="Decker R.S."/>
            <person name="Read T.D."/>
            <person name="Worsham P."/>
            <person name="Keim P.S."/>
            <person name="Salzberg S.L."/>
            <person name="Fraser-Liggett C.M."/>
            <person name="Rasko D.A."/>
        </authorList>
    </citation>
    <scope>NUCLEOTIDE SEQUENCE [LARGE SCALE GENOMIC DNA]</scope>
    <source>
        <strain>Ames ancestor</strain>
    </source>
</reference>
<reference key="3">
    <citation type="submission" date="2004-01" db="EMBL/GenBank/DDBJ databases">
        <title>Complete genome sequence of Bacillus anthracis Sterne.</title>
        <authorList>
            <person name="Brettin T.S."/>
            <person name="Bruce D."/>
            <person name="Challacombe J.F."/>
            <person name="Gilna P."/>
            <person name="Han C."/>
            <person name="Hill K."/>
            <person name="Hitchcock P."/>
            <person name="Jackson P."/>
            <person name="Keim P."/>
            <person name="Longmire J."/>
            <person name="Lucas S."/>
            <person name="Okinaka R."/>
            <person name="Richardson P."/>
            <person name="Rubin E."/>
            <person name="Tice H."/>
        </authorList>
    </citation>
    <scope>NUCLEOTIDE SEQUENCE [LARGE SCALE GENOMIC DNA]</scope>
    <source>
        <strain>Sterne</strain>
    </source>
</reference>
<reference key="4">
    <citation type="journal article" date="2007" name="PLoS ONE">
        <title>Molecular and structural discrimination of proline racemase and hydroxyproline-2-epimerase from nosocomial and bacterial pathogens.</title>
        <authorList>
            <person name="Goytia M."/>
            <person name="Chamond N."/>
            <person name="Cosson A."/>
            <person name="Coatnoan N."/>
            <person name="Hermant D."/>
            <person name="Berneman A."/>
            <person name="Minoprio P."/>
        </authorList>
    </citation>
    <scope>LACK OF ENZYMATIC ACTIVITY AS PROLINE RACEMASE AND HYDROXYPROLINE-2-EPIMERASE</scope>
    <source>
        <strain>9131</strain>
    </source>
</reference>
<feature type="chain" id="PRO_0000354037" description="Uncharacterized protein BA_0901/GBAA_0901/BAS0853">
    <location>
        <begin position="1"/>
        <end position="331"/>
    </location>
</feature>
<evidence type="ECO:0000305" key="1"/>
<accession>Q81UH1</accession>
<accession>Q6I2Q1</accession>
<accession>Q6KWH9</accession>
<dbReference type="EMBL" id="AE016879">
    <property type="protein sequence ID" value="AAP24898.1"/>
    <property type="molecule type" value="Genomic_DNA"/>
</dbReference>
<dbReference type="EMBL" id="AE017334">
    <property type="protein sequence ID" value="AAT30011.1"/>
    <property type="molecule type" value="Genomic_DNA"/>
</dbReference>
<dbReference type="EMBL" id="AE017225">
    <property type="protein sequence ID" value="AAT53180.1"/>
    <property type="molecule type" value="Genomic_DNA"/>
</dbReference>
<dbReference type="RefSeq" id="NP_843412.1">
    <property type="nucleotide sequence ID" value="NC_003997.3"/>
</dbReference>
<dbReference type="RefSeq" id="YP_027129.1">
    <property type="nucleotide sequence ID" value="NC_005945.1"/>
</dbReference>
<dbReference type="SMR" id="Q81UH1"/>
<dbReference type="IntAct" id="Q81UH1">
    <property type="interactions" value="1"/>
</dbReference>
<dbReference type="STRING" id="261594.GBAA_0901"/>
<dbReference type="DNASU" id="1088813"/>
<dbReference type="KEGG" id="ban:BA_0901"/>
<dbReference type="KEGG" id="bar:GBAA_0901"/>
<dbReference type="KEGG" id="bat:BAS0853"/>
<dbReference type="PATRIC" id="fig|198094.11.peg.897"/>
<dbReference type="eggNOG" id="COG3938">
    <property type="taxonomic scope" value="Bacteria"/>
</dbReference>
<dbReference type="HOGENOM" id="CLU_036729_0_0_9"/>
<dbReference type="OMA" id="ERRAYCM"/>
<dbReference type="OrthoDB" id="181267at2"/>
<dbReference type="Proteomes" id="UP000000427">
    <property type="component" value="Chromosome"/>
</dbReference>
<dbReference type="Proteomes" id="UP000000594">
    <property type="component" value="Chromosome"/>
</dbReference>
<dbReference type="GO" id="GO:0047580">
    <property type="term" value="F:4-hydroxyproline epimerase activity"/>
    <property type="evidence" value="ECO:0007669"/>
    <property type="project" value="TreeGrafter"/>
</dbReference>
<dbReference type="FunFam" id="3.10.310.10:FF:000023">
    <property type="entry name" value="Proline racemase"/>
    <property type="match status" value="1"/>
</dbReference>
<dbReference type="Gene3D" id="3.10.310.10">
    <property type="entry name" value="Diaminopimelate Epimerase, Chain A, domain 1"/>
    <property type="match status" value="2"/>
</dbReference>
<dbReference type="InterPro" id="IPR008794">
    <property type="entry name" value="Pro_racemase_fam"/>
</dbReference>
<dbReference type="PANTHER" id="PTHR33442">
    <property type="entry name" value="TRANS-3-HYDROXY-L-PROLINE DEHYDRATASE"/>
    <property type="match status" value="1"/>
</dbReference>
<dbReference type="PANTHER" id="PTHR33442:SF1">
    <property type="entry name" value="TRANS-3-HYDROXY-L-PROLINE DEHYDRATASE"/>
    <property type="match status" value="1"/>
</dbReference>
<dbReference type="Pfam" id="PF05544">
    <property type="entry name" value="Pro_racemase"/>
    <property type="match status" value="1"/>
</dbReference>
<dbReference type="PIRSF" id="PIRSF029792">
    <property type="entry name" value="Pro_racemase"/>
    <property type="match status" value="1"/>
</dbReference>
<dbReference type="SFLD" id="SFLDS00028">
    <property type="entry name" value="Proline_Racemase"/>
    <property type="match status" value="1"/>
</dbReference>
<dbReference type="SUPFAM" id="SSF54506">
    <property type="entry name" value="Diaminopimelate epimerase-like"/>
    <property type="match status" value="1"/>
</dbReference>
<protein>
    <recommendedName>
        <fullName>Uncharacterized protein BA_0901/GBAA_0901/BAS0853</fullName>
    </recommendedName>
</protein>
<comment type="similarity">
    <text evidence="1">Belongs to the proline racemase family.</text>
</comment>
<comment type="caution">
    <text evidence="1">This protein does not possess neither proline racemase nor hydroxyproline-2-epimerase activities.</text>
</comment>
<sequence>MKVSKVYTTIDAHVAGEPLRIITGGVPEIKGETQLERRWYCMEHLDYLREVLMYEPRGHHGMYGCIITPPASAHADFGVLFMHNEGWSTMCGHGIIAVITVGIETGMFETKQKFIIDSPAGEVIAYAKYNGSEVESVSFENVPSFVYKKDVPIKIDNYEFQVDIAFGGAFYAVVDSKEFGLKVDFKDLSAIQQWGGKIKHYIESKMEVKHPLEEGLKGIYGVIFSDDPKGEGATLRNVTIFADGQVDRSPCGTGTSARIATLFEKGILQKGEIFIHECITDGEFEGEVLSVTAVHTYEAVVPKVTGNAFITGFHQFVVDPRDDLNRGFLLG</sequence>
<organism>
    <name type="scientific">Bacillus anthracis</name>
    <dbReference type="NCBI Taxonomy" id="1392"/>
    <lineage>
        <taxon>Bacteria</taxon>
        <taxon>Bacillati</taxon>
        <taxon>Bacillota</taxon>
        <taxon>Bacilli</taxon>
        <taxon>Bacillales</taxon>
        <taxon>Bacillaceae</taxon>
        <taxon>Bacillus</taxon>
        <taxon>Bacillus cereus group</taxon>
    </lineage>
</organism>